<keyword id="KW-0963">Cytoplasm</keyword>
<keyword id="KW-0342">GTP-binding</keyword>
<keyword id="KW-0378">Hydrolase</keyword>
<keyword id="KW-0479">Metal-binding</keyword>
<keyword id="KW-0547">Nucleotide-binding</keyword>
<keyword id="KW-0690">Ribosome biogenesis</keyword>
<keyword id="KW-0694">RNA-binding</keyword>
<keyword id="KW-0699">rRNA-binding</keyword>
<keyword id="KW-0862">Zinc</keyword>
<evidence type="ECO:0000255" key="1">
    <source>
        <dbReference type="HAMAP-Rule" id="MF_01820"/>
    </source>
</evidence>
<evidence type="ECO:0000255" key="2">
    <source>
        <dbReference type="PROSITE-ProRule" id="PRU01058"/>
    </source>
</evidence>
<proteinExistence type="inferred from homology"/>
<accession>C5CSN3</accession>
<dbReference type="EC" id="3.6.1.-" evidence="1"/>
<dbReference type="EMBL" id="CP001635">
    <property type="protein sequence ID" value="ACS18131.1"/>
    <property type="molecule type" value="Genomic_DNA"/>
</dbReference>
<dbReference type="SMR" id="C5CSN3"/>
<dbReference type="STRING" id="543728.Vapar_1480"/>
<dbReference type="KEGG" id="vap:Vapar_1480"/>
<dbReference type="eggNOG" id="COG1162">
    <property type="taxonomic scope" value="Bacteria"/>
</dbReference>
<dbReference type="HOGENOM" id="CLU_033617_2_0_4"/>
<dbReference type="OrthoDB" id="9809485at2"/>
<dbReference type="GO" id="GO:0005737">
    <property type="term" value="C:cytoplasm"/>
    <property type="evidence" value="ECO:0007669"/>
    <property type="project" value="UniProtKB-SubCell"/>
</dbReference>
<dbReference type="GO" id="GO:0005525">
    <property type="term" value="F:GTP binding"/>
    <property type="evidence" value="ECO:0007669"/>
    <property type="project" value="UniProtKB-UniRule"/>
</dbReference>
<dbReference type="GO" id="GO:0003924">
    <property type="term" value="F:GTPase activity"/>
    <property type="evidence" value="ECO:0007669"/>
    <property type="project" value="UniProtKB-UniRule"/>
</dbReference>
<dbReference type="GO" id="GO:0046872">
    <property type="term" value="F:metal ion binding"/>
    <property type="evidence" value="ECO:0007669"/>
    <property type="project" value="UniProtKB-KW"/>
</dbReference>
<dbReference type="GO" id="GO:0019843">
    <property type="term" value="F:rRNA binding"/>
    <property type="evidence" value="ECO:0007669"/>
    <property type="project" value="UniProtKB-KW"/>
</dbReference>
<dbReference type="GO" id="GO:0042274">
    <property type="term" value="P:ribosomal small subunit biogenesis"/>
    <property type="evidence" value="ECO:0007669"/>
    <property type="project" value="UniProtKB-UniRule"/>
</dbReference>
<dbReference type="CDD" id="cd04466">
    <property type="entry name" value="S1_YloQ_GTPase"/>
    <property type="match status" value="1"/>
</dbReference>
<dbReference type="CDD" id="cd01854">
    <property type="entry name" value="YjeQ_EngC"/>
    <property type="match status" value="1"/>
</dbReference>
<dbReference type="Gene3D" id="2.40.50.140">
    <property type="entry name" value="Nucleic acid-binding proteins"/>
    <property type="match status" value="1"/>
</dbReference>
<dbReference type="Gene3D" id="3.40.50.300">
    <property type="entry name" value="P-loop containing nucleotide triphosphate hydrolases"/>
    <property type="match status" value="1"/>
</dbReference>
<dbReference type="Gene3D" id="1.10.40.50">
    <property type="entry name" value="Probable gtpase engc, domain 3"/>
    <property type="match status" value="1"/>
</dbReference>
<dbReference type="HAMAP" id="MF_01820">
    <property type="entry name" value="GTPase_RsgA"/>
    <property type="match status" value="1"/>
</dbReference>
<dbReference type="InterPro" id="IPR030378">
    <property type="entry name" value="G_CP_dom"/>
</dbReference>
<dbReference type="InterPro" id="IPR012340">
    <property type="entry name" value="NA-bd_OB-fold"/>
</dbReference>
<dbReference type="InterPro" id="IPR027417">
    <property type="entry name" value="P-loop_NTPase"/>
</dbReference>
<dbReference type="InterPro" id="IPR004881">
    <property type="entry name" value="Ribosome_biogen_GTPase_RsgA"/>
</dbReference>
<dbReference type="InterPro" id="IPR010914">
    <property type="entry name" value="RsgA_GTPase_dom"/>
</dbReference>
<dbReference type="InterPro" id="IPR031944">
    <property type="entry name" value="RsgA_N"/>
</dbReference>
<dbReference type="NCBIfam" id="TIGR00157">
    <property type="entry name" value="ribosome small subunit-dependent GTPase A"/>
    <property type="match status" value="1"/>
</dbReference>
<dbReference type="PANTHER" id="PTHR32120">
    <property type="entry name" value="SMALL RIBOSOMAL SUBUNIT BIOGENESIS GTPASE RSGA"/>
    <property type="match status" value="1"/>
</dbReference>
<dbReference type="PANTHER" id="PTHR32120:SF11">
    <property type="entry name" value="SMALL RIBOSOMAL SUBUNIT BIOGENESIS GTPASE RSGA 1, MITOCHONDRIAL-RELATED"/>
    <property type="match status" value="1"/>
</dbReference>
<dbReference type="Pfam" id="PF03193">
    <property type="entry name" value="RsgA_GTPase"/>
    <property type="match status" value="1"/>
</dbReference>
<dbReference type="SUPFAM" id="SSF50249">
    <property type="entry name" value="Nucleic acid-binding proteins"/>
    <property type="match status" value="1"/>
</dbReference>
<dbReference type="SUPFAM" id="SSF52540">
    <property type="entry name" value="P-loop containing nucleoside triphosphate hydrolases"/>
    <property type="match status" value="1"/>
</dbReference>
<dbReference type="PROSITE" id="PS50936">
    <property type="entry name" value="ENGC_GTPASE"/>
    <property type="match status" value="1"/>
</dbReference>
<dbReference type="PROSITE" id="PS51721">
    <property type="entry name" value="G_CP"/>
    <property type="match status" value="1"/>
</dbReference>
<feature type="chain" id="PRO_1000216053" description="Small ribosomal subunit biogenesis GTPase RsgA">
    <location>
        <begin position="1"/>
        <end position="318"/>
    </location>
</feature>
<feature type="domain" description="CP-type G" evidence="2">
    <location>
        <begin position="82"/>
        <end position="246"/>
    </location>
</feature>
<feature type="binding site" evidence="1">
    <location>
        <begin position="132"/>
        <end position="135"/>
    </location>
    <ligand>
        <name>GTP</name>
        <dbReference type="ChEBI" id="CHEBI:37565"/>
    </ligand>
</feature>
<feature type="binding site" evidence="1">
    <location>
        <begin position="186"/>
        <end position="194"/>
    </location>
    <ligand>
        <name>GTP</name>
        <dbReference type="ChEBI" id="CHEBI:37565"/>
    </ligand>
</feature>
<feature type="binding site" evidence="1">
    <location>
        <position position="270"/>
    </location>
    <ligand>
        <name>Zn(2+)</name>
        <dbReference type="ChEBI" id="CHEBI:29105"/>
    </ligand>
</feature>
<feature type="binding site" evidence="1">
    <location>
        <position position="275"/>
    </location>
    <ligand>
        <name>Zn(2+)</name>
        <dbReference type="ChEBI" id="CHEBI:29105"/>
    </ligand>
</feature>
<feature type="binding site" evidence="1">
    <location>
        <position position="277"/>
    </location>
    <ligand>
        <name>Zn(2+)</name>
        <dbReference type="ChEBI" id="CHEBI:29105"/>
    </ligand>
</feature>
<feature type="binding site" evidence="1">
    <location>
        <position position="283"/>
    </location>
    <ligand>
        <name>Zn(2+)</name>
        <dbReference type="ChEBI" id="CHEBI:29105"/>
    </ligand>
</feature>
<protein>
    <recommendedName>
        <fullName evidence="1">Small ribosomal subunit biogenesis GTPase RsgA</fullName>
        <ecNumber evidence="1">3.6.1.-</ecNumber>
    </recommendedName>
</protein>
<comment type="function">
    <text evidence="1">One of several proteins that assist in the late maturation steps of the functional core of the 30S ribosomal subunit. Helps release RbfA from mature subunits. May play a role in the assembly of ribosomal proteins into the subunit. Circularly permuted GTPase that catalyzes slow GTP hydrolysis, GTPase activity is stimulated by the 30S ribosomal subunit.</text>
</comment>
<comment type="cofactor">
    <cofactor evidence="1">
        <name>Zn(2+)</name>
        <dbReference type="ChEBI" id="CHEBI:29105"/>
    </cofactor>
    <text evidence="1">Binds 1 zinc ion per subunit.</text>
</comment>
<comment type="subunit">
    <text evidence="1">Monomer. Associates with 30S ribosomal subunit, binds 16S rRNA.</text>
</comment>
<comment type="subcellular location">
    <subcellularLocation>
        <location evidence="1">Cytoplasm</location>
    </subcellularLocation>
</comment>
<comment type="similarity">
    <text evidence="1">Belongs to the TRAFAC class YlqF/YawG GTPase family. RsgA subfamily.</text>
</comment>
<organism>
    <name type="scientific">Variovorax paradoxus (strain S110)</name>
    <dbReference type="NCBI Taxonomy" id="543728"/>
    <lineage>
        <taxon>Bacteria</taxon>
        <taxon>Pseudomonadati</taxon>
        <taxon>Pseudomonadota</taxon>
        <taxon>Betaproteobacteria</taxon>
        <taxon>Burkholderiales</taxon>
        <taxon>Comamonadaceae</taxon>
        <taxon>Variovorax</taxon>
    </lineage>
</organism>
<reference key="1">
    <citation type="journal article" date="2011" name="J. Bacteriol.">
        <title>Complete genome sequence of the metabolically versatile plant growth-promoting endophyte, Variovorax paradoxus S110.</title>
        <authorList>
            <person name="Han J.I."/>
            <person name="Choi H.K."/>
            <person name="Lee S.W."/>
            <person name="Orwin P.M."/>
            <person name="Kim J."/>
            <person name="Laroe S.L."/>
            <person name="Kim T.G."/>
            <person name="O'Neil J."/>
            <person name="Leadbetter J.R."/>
            <person name="Lee S.Y."/>
            <person name="Hur C.G."/>
            <person name="Spain J.C."/>
            <person name="Ovchinnikova G."/>
            <person name="Goodwin L."/>
            <person name="Han C."/>
        </authorList>
    </citation>
    <scope>NUCLEOTIDE SEQUENCE [LARGE SCALE GENOMIC DNA]</scope>
    <source>
        <strain>S110</strain>
    </source>
</reference>
<sequence>MAKPGRTPAKGAGTSARILHDGLVIASHGRHCLVETPTGERLICHPRGKKSQAVVGDRVRWQASEDEGTIEEVVPRRNLFYRQDEIRTKSFAANLDHVLILIAAEPEFSEHQLARALIAAEAERITPIIALNKSDLAEPFERAWNKLAPYRRMHHGVLPLSLKASGEADYASLMKLLAGKSTLVLGPSGAGKSTLINLLVPGATALTGEISQALNSGKHTTTSTTWYWVDEARTTSLIDSPGFQEFGLNHIAPMQLAGLMPDIAEHANDCKFYNCTHLHEPGCGVIANVDAPGKPGPISATRYRIYGELFAELSQSRY</sequence>
<gene>
    <name evidence="1" type="primary">rsgA</name>
    <name type="ordered locus">Vapar_1480</name>
</gene>
<name>RSGA_VARPS</name>